<feature type="chain" id="PRO_0000101964" description="UDP-N-acetylmuramyl-tripeptide synthetase">
    <location>
        <begin position="1"/>
        <end position="540"/>
    </location>
</feature>
<feature type="binding site" evidence="1">
    <location>
        <position position="33"/>
    </location>
    <ligand>
        <name>UDP-N-acetyl-alpha-D-muramoyl-L-alanyl-D-glutamate</name>
        <dbReference type="ChEBI" id="CHEBI:83900"/>
    </ligand>
</feature>
<feature type="binding site" evidence="1">
    <location>
        <begin position="114"/>
        <end position="120"/>
    </location>
    <ligand>
        <name>ATP</name>
        <dbReference type="ChEBI" id="CHEBI:30616"/>
    </ligand>
</feature>
<feature type="binding site" evidence="1">
    <location>
        <begin position="158"/>
        <end position="159"/>
    </location>
    <ligand>
        <name>UDP-N-acetyl-alpha-D-muramoyl-L-alanyl-D-glutamate</name>
        <dbReference type="ChEBI" id="CHEBI:83900"/>
    </ligand>
</feature>
<feature type="binding site" evidence="1">
    <location>
        <position position="185"/>
    </location>
    <ligand>
        <name>UDP-N-acetyl-alpha-D-muramoyl-L-alanyl-D-glutamate</name>
        <dbReference type="ChEBI" id="CHEBI:83900"/>
    </ligand>
</feature>
<feature type="binding site" evidence="1">
    <location>
        <position position="195"/>
    </location>
    <ligand>
        <name>UDP-N-acetyl-alpha-D-muramoyl-L-alanyl-D-glutamate</name>
        <dbReference type="ChEBI" id="CHEBI:83900"/>
    </ligand>
</feature>
<feature type="modified residue" description="N6-carboxylysine" evidence="1">
    <location>
        <position position="227"/>
    </location>
</feature>
<protein>
    <recommendedName>
        <fullName evidence="1">UDP-N-acetylmuramyl-tripeptide synthetase</fullName>
        <ecNumber evidence="1">6.3.2.-</ecNumber>
    </recommendedName>
    <alternativeName>
        <fullName evidence="1">UDP-MurNAc-tripeptide synthetase</fullName>
    </alternativeName>
</protein>
<accession>O83903</accession>
<comment type="function">
    <text evidence="1">Catalyzes the addition of an amino acid to the nucleotide precursor UDP-N-acetylmuramoyl-L-alanyl-D-glutamate (UMAG) in the biosynthesis of bacterial cell-wall peptidoglycan.</text>
</comment>
<comment type="pathway">
    <text evidence="1">Cell wall biogenesis; peptidoglycan biosynthesis.</text>
</comment>
<comment type="subcellular location">
    <subcellularLocation>
        <location evidence="1">Cytoplasm</location>
    </subcellularLocation>
</comment>
<comment type="PTM">
    <text evidence="1">Carboxylation is probably crucial for Mg(2+) binding and, consequently, for the gamma-phosphate positioning of ATP.</text>
</comment>
<comment type="similarity">
    <text evidence="1">Belongs to the MurCDEF family. MurE subfamily.</text>
</comment>
<name>MURE_TREPA</name>
<reference key="1">
    <citation type="journal article" date="1998" name="Science">
        <title>Complete genome sequence of Treponema pallidum, the syphilis spirochete.</title>
        <authorList>
            <person name="Fraser C.M."/>
            <person name="Norris S.J."/>
            <person name="Weinstock G.M."/>
            <person name="White O."/>
            <person name="Sutton G.G."/>
            <person name="Dodson R.J."/>
            <person name="Gwinn M.L."/>
            <person name="Hickey E.K."/>
            <person name="Clayton R.A."/>
            <person name="Ketchum K.A."/>
            <person name="Sodergren E."/>
            <person name="Hardham J.M."/>
            <person name="McLeod M.P."/>
            <person name="Salzberg S.L."/>
            <person name="Peterson J.D."/>
            <person name="Khalak H.G."/>
            <person name="Richardson D.L."/>
            <person name="Howell J.K."/>
            <person name="Chidambaram M."/>
            <person name="Utterback T.R."/>
            <person name="McDonald L.A."/>
            <person name="Artiach P."/>
            <person name="Bowman C."/>
            <person name="Cotton M.D."/>
            <person name="Fujii C."/>
            <person name="Garland S.A."/>
            <person name="Hatch B."/>
            <person name="Horst K."/>
            <person name="Roberts K.M."/>
            <person name="Sandusky M."/>
            <person name="Weidman J.F."/>
            <person name="Smith H.O."/>
            <person name="Venter J.C."/>
        </authorList>
    </citation>
    <scope>NUCLEOTIDE SEQUENCE [LARGE SCALE GENOMIC DNA]</scope>
    <source>
        <strain>Nichols</strain>
    </source>
</reference>
<evidence type="ECO:0000255" key="1">
    <source>
        <dbReference type="HAMAP-Rule" id="MF_00208"/>
    </source>
</evidence>
<sequence length="540" mass="59457">MLYRKPITVCLASCSVQETHGSACDVSSIAYDSRAVREGSVFFALRGTHAHGAQYIHAAIDAGACAIVHDCPLDTYVVGVYYARVPDARCALSSAAAAFYDFPTRALTVIGVTGTEGKSSTVSFIAQLLRLCGKRVGFISTVEYSLGDDILPNAEHQTTPESLTVQRLLAEMREHSCEFAVIEASSHGLSTRTARLQDVAFDVAVCMNVRHEHLEFHGSFEQYRFDKANVFRALDAHDHIKDGRRVPSFGVLWAEDASAVYFREATHKPCFFFKRGTGAEQRTAACLERMPCTLLWVQTLPQISQALRLRFVLSTVQEPAQPAQDGAHDVSVPLEGAFNACNIAASFLVLHGLLGTSLAAFAQHVQYVQPIQGRMQRVDMGQDFEVLIDYAHTPSSFEEILPPLAARVRARKRRMLVLFGSAGERDTQKRAMQGAIASRYAHVIVLTDEDPRGEDPMGILCMIAAGCEHKKLGKTLFLIPDRVAALRHIFSLARAQDLVLLLGKGHEHSIIYAHTVQPYDEERTARELLRASLSSDTLLS</sequence>
<dbReference type="EC" id="6.3.2.-" evidence="1"/>
<dbReference type="EMBL" id="AE000520">
    <property type="protein sequence ID" value="AAC65885.1"/>
    <property type="molecule type" value="Genomic_DNA"/>
</dbReference>
<dbReference type="PIR" id="F71264">
    <property type="entry name" value="F71264"/>
</dbReference>
<dbReference type="RefSeq" id="WP_010882376.1">
    <property type="nucleotide sequence ID" value="NC_021490.2"/>
</dbReference>
<dbReference type="SMR" id="O83903"/>
<dbReference type="IntAct" id="O83903">
    <property type="interactions" value="1"/>
</dbReference>
<dbReference type="STRING" id="243276.TP_0933"/>
<dbReference type="EnsemblBacteria" id="AAC65885">
    <property type="protein sequence ID" value="AAC65885"/>
    <property type="gene ID" value="TP_0933"/>
</dbReference>
<dbReference type="KEGG" id="tpa:TP_0933"/>
<dbReference type="KEGG" id="tpw:TPANIC_0933"/>
<dbReference type="eggNOG" id="COG0769">
    <property type="taxonomic scope" value="Bacteria"/>
</dbReference>
<dbReference type="HOGENOM" id="CLU_022291_4_1_12"/>
<dbReference type="OrthoDB" id="9800958at2"/>
<dbReference type="UniPathway" id="UPA00219"/>
<dbReference type="Proteomes" id="UP000000811">
    <property type="component" value="Chromosome"/>
</dbReference>
<dbReference type="GO" id="GO:0005737">
    <property type="term" value="C:cytoplasm"/>
    <property type="evidence" value="ECO:0007669"/>
    <property type="project" value="UniProtKB-SubCell"/>
</dbReference>
<dbReference type="GO" id="GO:0016881">
    <property type="term" value="F:acid-amino acid ligase activity"/>
    <property type="evidence" value="ECO:0007669"/>
    <property type="project" value="UniProtKB-UniRule"/>
</dbReference>
<dbReference type="GO" id="GO:0005524">
    <property type="term" value="F:ATP binding"/>
    <property type="evidence" value="ECO:0007669"/>
    <property type="project" value="UniProtKB-UniRule"/>
</dbReference>
<dbReference type="GO" id="GO:0000287">
    <property type="term" value="F:magnesium ion binding"/>
    <property type="evidence" value="ECO:0007669"/>
    <property type="project" value="UniProtKB-UniRule"/>
</dbReference>
<dbReference type="GO" id="GO:0051301">
    <property type="term" value="P:cell division"/>
    <property type="evidence" value="ECO:0007669"/>
    <property type="project" value="UniProtKB-KW"/>
</dbReference>
<dbReference type="GO" id="GO:0071555">
    <property type="term" value="P:cell wall organization"/>
    <property type="evidence" value="ECO:0007669"/>
    <property type="project" value="UniProtKB-KW"/>
</dbReference>
<dbReference type="GO" id="GO:0009252">
    <property type="term" value="P:peptidoglycan biosynthetic process"/>
    <property type="evidence" value="ECO:0007669"/>
    <property type="project" value="UniProtKB-UniRule"/>
</dbReference>
<dbReference type="GO" id="GO:0008360">
    <property type="term" value="P:regulation of cell shape"/>
    <property type="evidence" value="ECO:0007669"/>
    <property type="project" value="UniProtKB-KW"/>
</dbReference>
<dbReference type="Gene3D" id="3.90.190.20">
    <property type="entry name" value="Mur ligase, C-terminal domain"/>
    <property type="match status" value="1"/>
</dbReference>
<dbReference type="Gene3D" id="3.40.1190.10">
    <property type="entry name" value="Mur-like, catalytic domain"/>
    <property type="match status" value="1"/>
</dbReference>
<dbReference type="Gene3D" id="3.40.1390.10">
    <property type="entry name" value="MurE/MurF, N-terminal domain"/>
    <property type="match status" value="1"/>
</dbReference>
<dbReference type="HAMAP" id="MF_00208">
    <property type="entry name" value="MurE"/>
    <property type="match status" value="1"/>
</dbReference>
<dbReference type="InterPro" id="IPR036565">
    <property type="entry name" value="Mur-like_cat_sf"/>
</dbReference>
<dbReference type="InterPro" id="IPR004101">
    <property type="entry name" value="Mur_ligase_C"/>
</dbReference>
<dbReference type="InterPro" id="IPR036615">
    <property type="entry name" value="Mur_ligase_C_dom_sf"/>
</dbReference>
<dbReference type="InterPro" id="IPR013221">
    <property type="entry name" value="Mur_ligase_cen"/>
</dbReference>
<dbReference type="InterPro" id="IPR000713">
    <property type="entry name" value="Mur_ligase_N"/>
</dbReference>
<dbReference type="InterPro" id="IPR035911">
    <property type="entry name" value="MurE/MurF_N"/>
</dbReference>
<dbReference type="InterPro" id="IPR005761">
    <property type="entry name" value="UDP-N-AcMur-Glu-dNH2Pim_ligase"/>
</dbReference>
<dbReference type="NCBIfam" id="TIGR01085">
    <property type="entry name" value="murE"/>
    <property type="match status" value="1"/>
</dbReference>
<dbReference type="PANTHER" id="PTHR23135">
    <property type="entry name" value="MUR LIGASE FAMILY MEMBER"/>
    <property type="match status" value="1"/>
</dbReference>
<dbReference type="PANTHER" id="PTHR23135:SF4">
    <property type="entry name" value="UDP-N-ACETYLMURAMOYL-L-ALANYL-D-GLUTAMATE--2,6-DIAMINOPIMELATE LIGASE MURE HOMOLOG, CHLOROPLASTIC"/>
    <property type="match status" value="1"/>
</dbReference>
<dbReference type="Pfam" id="PF01225">
    <property type="entry name" value="Mur_ligase"/>
    <property type="match status" value="1"/>
</dbReference>
<dbReference type="Pfam" id="PF02875">
    <property type="entry name" value="Mur_ligase_C"/>
    <property type="match status" value="1"/>
</dbReference>
<dbReference type="Pfam" id="PF08245">
    <property type="entry name" value="Mur_ligase_M"/>
    <property type="match status" value="1"/>
</dbReference>
<dbReference type="SUPFAM" id="SSF53623">
    <property type="entry name" value="MurD-like peptide ligases, catalytic domain"/>
    <property type="match status" value="1"/>
</dbReference>
<dbReference type="SUPFAM" id="SSF53244">
    <property type="entry name" value="MurD-like peptide ligases, peptide-binding domain"/>
    <property type="match status" value="1"/>
</dbReference>
<dbReference type="SUPFAM" id="SSF63418">
    <property type="entry name" value="MurE/MurF N-terminal domain"/>
    <property type="match status" value="1"/>
</dbReference>
<gene>
    <name evidence="1" type="primary">murE</name>
    <name type="ordered locus">TP_0933</name>
</gene>
<organism>
    <name type="scientific">Treponema pallidum (strain Nichols)</name>
    <dbReference type="NCBI Taxonomy" id="243276"/>
    <lineage>
        <taxon>Bacteria</taxon>
        <taxon>Pseudomonadati</taxon>
        <taxon>Spirochaetota</taxon>
        <taxon>Spirochaetia</taxon>
        <taxon>Spirochaetales</taxon>
        <taxon>Treponemataceae</taxon>
        <taxon>Treponema</taxon>
    </lineage>
</organism>
<keyword id="KW-0067">ATP-binding</keyword>
<keyword id="KW-0131">Cell cycle</keyword>
<keyword id="KW-0132">Cell division</keyword>
<keyword id="KW-0133">Cell shape</keyword>
<keyword id="KW-0961">Cell wall biogenesis/degradation</keyword>
<keyword id="KW-0963">Cytoplasm</keyword>
<keyword id="KW-0436">Ligase</keyword>
<keyword id="KW-0547">Nucleotide-binding</keyword>
<keyword id="KW-0573">Peptidoglycan synthesis</keyword>
<keyword id="KW-1185">Reference proteome</keyword>
<proteinExistence type="inferred from homology"/>